<gene>
    <name type="primary">torA</name>
    <name type="ordered locus">STY3956</name>
    <name type="ordered locus">t3696</name>
</gene>
<reference key="1">
    <citation type="journal article" date="2001" name="Nature">
        <title>Complete genome sequence of a multiple drug resistant Salmonella enterica serovar Typhi CT18.</title>
        <authorList>
            <person name="Parkhill J."/>
            <person name="Dougan G."/>
            <person name="James K.D."/>
            <person name="Thomson N.R."/>
            <person name="Pickard D."/>
            <person name="Wain J."/>
            <person name="Churcher C.M."/>
            <person name="Mungall K.L."/>
            <person name="Bentley S.D."/>
            <person name="Holden M.T.G."/>
            <person name="Sebaihia M."/>
            <person name="Baker S."/>
            <person name="Basham D."/>
            <person name="Brooks K."/>
            <person name="Chillingworth T."/>
            <person name="Connerton P."/>
            <person name="Cronin A."/>
            <person name="Davis P."/>
            <person name="Davies R.M."/>
            <person name="Dowd L."/>
            <person name="White N."/>
            <person name="Farrar J."/>
            <person name="Feltwell T."/>
            <person name="Hamlin N."/>
            <person name="Haque A."/>
            <person name="Hien T.T."/>
            <person name="Holroyd S."/>
            <person name="Jagels K."/>
            <person name="Krogh A."/>
            <person name="Larsen T.S."/>
            <person name="Leather S."/>
            <person name="Moule S."/>
            <person name="O'Gaora P."/>
            <person name="Parry C."/>
            <person name="Quail M.A."/>
            <person name="Rutherford K.M."/>
            <person name="Simmonds M."/>
            <person name="Skelton J."/>
            <person name="Stevens K."/>
            <person name="Whitehead S."/>
            <person name="Barrell B.G."/>
        </authorList>
    </citation>
    <scope>NUCLEOTIDE SEQUENCE [LARGE SCALE GENOMIC DNA]</scope>
    <source>
        <strain>CT18</strain>
    </source>
</reference>
<reference key="2">
    <citation type="journal article" date="2003" name="J. Bacteriol.">
        <title>Comparative genomics of Salmonella enterica serovar Typhi strains Ty2 and CT18.</title>
        <authorList>
            <person name="Deng W."/>
            <person name="Liou S.-R."/>
            <person name="Plunkett G. III"/>
            <person name="Mayhew G.F."/>
            <person name="Rose D.J."/>
            <person name="Burland V."/>
            <person name="Kodoyianni V."/>
            <person name="Schwartz D.C."/>
            <person name="Blattner F.R."/>
        </authorList>
    </citation>
    <scope>NUCLEOTIDE SEQUENCE [LARGE SCALE GENOMIC DNA]</scope>
    <source>
        <strain>ATCC 700931 / Ty2</strain>
    </source>
</reference>
<organism>
    <name type="scientific">Salmonella typhi</name>
    <dbReference type="NCBI Taxonomy" id="90370"/>
    <lineage>
        <taxon>Bacteria</taxon>
        <taxon>Pseudomonadati</taxon>
        <taxon>Pseudomonadota</taxon>
        <taxon>Gammaproteobacteria</taxon>
        <taxon>Enterobacterales</taxon>
        <taxon>Enterobacteriaceae</taxon>
        <taxon>Salmonella</taxon>
    </lineage>
</organism>
<proteinExistence type="inferred from homology"/>
<protein>
    <recommendedName>
        <fullName>Trimethylamine-N-oxide reductase</fullName>
        <shortName>TMAO reductase</shortName>
        <shortName>Trimethylamine oxidase</shortName>
        <ecNumber>1.7.2.3</ecNumber>
    </recommendedName>
</protein>
<name>TORA_SALTI</name>
<keyword id="KW-0479">Metal-binding</keyword>
<keyword id="KW-0500">Molybdenum</keyword>
<keyword id="KW-0560">Oxidoreductase</keyword>
<keyword id="KW-0574">Periplasm</keyword>
<keyword id="KW-0732">Signal</keyword>
<dbReference type="EC" id="1.7.2.3"/>
<dbReference type="EMBL" id="AL513382">
    <property type="protein sequence ID" value="CAD03172.1"/>
    <property type="molecule type" value="Genomic_DNA"/>
</dbReference>
<dbReference type="EMBL" id="AE014613">
    <property type="protein sequence ID" value="AAO71191.1"/>
    <property type="molecule type" value="Genomic_DNA"/>
</dbReference>
<dbReference type="RefSeq" id="NP_458117.1">
    <property type="nucleotide sequence ID" value="NC_003198.1"/>
</dbReference>
<dbReference type="RefSeq" id="WP_000790669.1">
    <property type="nucleotide sequence ID" value="NZ_WSUR01000056.1"/>
</dbReference>
<dbReference type="SMR" id="Q8Z2M4"/>
<dbReference type="STRING" id="220341.gene:17587815"/>
<dbReference type="KEGG" id="stt:t3696"/>
<dbReference type="KEGG" id="sty:STY3956"/>
<dbReference type="PATRIC" id="fig|220341.7.peg.4042"/>
<dbReference type="eggNOG" id="COG0243">
    <property type="taxonomic scope" value="Bacteria"/>
</dbReference>
<dbReference type="HOGENOM" id="CLU_000422_13_3_6"/>
<dbReference type="OMA" id="DINWNGK"/>
<dbReference type="OrthoDB" id="9815647at2"/>
<dbReference type="Proteomes" id="UP000000541">
    <property type="component" value="Chromosome"/>
</dbReference>
<dbReference type="Proteomes" id="UP000002670">
    <property type="component" value="Chromosome"/>
</dbReference>
<dbReference type="GO" id="GO:0030288">
    <property type="term" value="C:outer membrane-bounded periplasmic space"/>
    <property type="evidence" value="ECO:0007669"/>
    <property type="project" value="TreeGrafter"/>
</dbReference>
<dbReference type="GO" id="GO:0009055">
    <property type="term" value="F:electron transfer activity"/>
    <property type="evidence" value="ECO:0007669"/>
    <property type="project" value="TreeGrafter"/>
</dbReference>
<dbReference type="GO" id="GO:0030151">
    <property type="term" value="F:molybdenum ion binding"/>
    <property type="evidence" value="ECO:0007669"/>
    <property type="project" value="InterPro"/>
</dbReference>
<dbReference type="GO" id="GO:0043546">
    <property type="term" value="F:molybdopterin cofactor binding"/>
    <property type="evidence" value="ECO:0007669"/>
    <property type="project" value="InterPro"/>
</dbReference>
<dbReference type="GO" id="GO:0050626">
    <property type="term" value="F:trimethylamine-N-oxide reductase (cytochrome c) activity"/>
    <property type="evidence" value="ECO:0007669"/>
    <property type="project" value="UniProtKB-EC"/>
</dbReference>
<dbReference type="GO" id="GO:0009061">
    <property type="term" value="P:anaerobic respiration"/>
    <property type="evidence" value="ECO:0007669"/>
    <property type="project" value="TreeGrafter"/>
</dbReference>
<dbReference type="CDD" id="cd02793">
    <property type="entry name" value="MopB_CT_DMSOR-BSOR-TMAOR"/>
    <property type="match status" value="1"/>
</dbReference>
<dbReference type="CDD" id="cd02769">
    <property type="entry name" value="MopB_DMSOR-BSOR-TMAOR"/>
    <property type="match status" value="1"/>
</dbReference>
<dbReference type="FunFam" id="2.40.40.20:FF:000009">
    <property type="entry name" value="Biotin sulfoxide reductase 2"/>
    <property type="match status" value="1"/>
</dbReference>
<dbReference type="FunFam" id="3.40.228.10:FF:000003">
    <property type="entry name" value="Biotin sulfoxide reductase 2"/>
    <property type="match status" value="1"/>
</dbReference>
<dbReference type="Gene3D" id="2.40.40.20">
    <property type="match status" value="1"/>
</dbReference>
<dbReference type="Gene3D" id="3.40.50.740">
    <property type="match status" value="1"/>
</dbReference>
<dbReference type="Gene3D" id="3.40.228.10">
    <property type="entry name" value="Dimethylsulfoxide Reductase, domain 2"/>
    <property type="match status" value="1"/>
</dbReference>
<dbReference type="Gene3D" id="3.90.55.10">
    <property type="entry name" value="Dimethylsulfoxide Reductase, domain 3"/>
    <property type="match status" value="1"/>
</dbReference>
<dbReference type="InterPro" id="IPR009010">
    <property type="entry name" value="Asp_de-COase-like_dom_sf"/>
</dbReference>
<dbReference type="InterPro" id="IPR006658">
    <property type="entry name" value="BisC"/>
</dbReference>
<dbReference type="InterPro" id="IPR041954">
    <property type="entry name" value="CT_DMSOR/BSOR/TMAOR"/>
</dbReference>
<dbReference type="InterPro" id="IPR041460">
    <property type="entry name" value="Molybdopterin_N"/>
</dbReference>
<dbReference type="InterPro" id="IPR006657">
    <property type="entry name" value="MoPterin_dinucl-bd_dom"/>
</dbReference>
<dbReference type="InterPro" id="IPR006656">
    <property type="entry name" value="Mopterin_OxRdtase"/>
</dbReference>
<dbReference type="InterPro" id="IPR006655">
    <property type="entry name" value="Mopterin_OxRdtase_prok_CS"/>
</dbReference>
<dbReference type="InterPro" id="IPR050612">
    <property type="entry name" value="Prok_Mopterin_Oxidored"/>
</dbReference>
<dbReference type="InterPro" id="IPR006311">
    <property type="entry name" value="TAT_signal"/>
</dbReference>
<dbReference type="InterPro" id="IPR011887">
    <property type="entry name" value="TorA"/>
</dbReference>
<dbReference type="NCBIfam" id="TIGR00509">
    <property type="entry name" value="bisC_fam"/>
    <property type="match status" value="1"/>
</dbReference>
<dbReference type="NCBIfam" id="NF011682">
    <property type="entry name" value="PRK15102.1"/>
    <property type="match status" value="1"/>
</dbReference>
<dbReference type="NCBIfam" id="TIGR02164">
    <property type="entry name" value="torA"/>
    <property type="match status" value="1"/>
</dbReference>
<dbReference type="PANTHER" id="PTHR43742">
    <property type="entry name" value="TRIMETHYLAMINE-N-OXIDE REDUCTASE"/>
    <property type="match status" value="1"/>
</dbReference>
<dbReference type="PANTHER" id="PTHR43742:SF4">
    <property type="entry name" value="TRIMETHYLAMINE-N-OXIDE REDUCTASE 1"/>
    <property type="match status" value="1"/>
</dbReference>
<dbReference type="Pfam" id="PF00384">
    <property type="entry name" value="Molybdopterin"/>
    <property type="match status" value="1"/>
</dbReference>
<dbReference type="Pfam" id="PF18364">
    <property type="entry name" value="Molybdopterin_N"/>
    <property type="match status" value="1"/>
</dbReference>
<dbReference type="Pfam" id="PF01568">
    <property type="entry name" value="Molydop_binding"/>
    <property type="match status" value="1"/>
</dbReference>
<dbReference type="SUPFAM" id="SSF50692">
    <property type="entry name" value="ADC-like"/>
    <property type="match status" value="1"/>
</dbReference>
<dbReference type="SUPFAM" id="SSF53706">
    <property type="entry name" value="Formate dehydrogenase/DMSO reductase, domains 1-3"/>
    <property type="match status" value="1"/>
</dbReference>
<dbReference type="PROSITE" id="PS00490">
    <property type="entry name" value="MOLYBDOPTERIN_PROK_2"/>
    <property type="match status" value="1"/>
</dbReference>
<dbReference type="PROSITE" id="PS00932">
    <property type="entry name" value="MOLYBDOPTERIN_PROK_3"/>
    <property type="match status" value="1"/>
</dbReference>
<dbReference type="PROSITE" id="PS51318">
    <property type="entry name" value="TAT"/>
    <property type="match status" value="1"/>
</dbReference>
<sequence length="850" mass="94675">MKNKDSLHVSRRRFLAQLGGLTVAGMLGPSLLTPRSARAADAVAPGAATKEGILTGSHWGAIRATVVDGRFVAAKPFEQDKYPSKMIAGLPDHVHNAARIRYPMVRVDWMRKGHQSDTSQRGDNRFVRVSWDEALDLFYQELERVQKTYGPSALLTASGWQSTGMFHNASGMLARAIALHGNSVSTGGDYSTGAAQVILPRVVGSMEVYEQQTSWPLVLQNSKTIVLWGSDMVKNQQANWWCPDHDVYQYYEQLKEKVASGAISVISIDPVVTSTHDYLGRDKVKHIAINPQTDVPLQLALAHTLYSEKLYDKNFLDNYCVGFDQFLPYLLGEKDGQPKDAAWAEKLCGIDADTIRALARQMAGDRTQIIAGWCVQRMQHGEQWSWMVVVLAAMLGQIGLPGGGFGFGWHYNGAGTPGRKGIILSGFSGSTTVPPVHDSTDYKGYSSTIPIARFMDAILEPGKIINWNGKSVKLPPLKMCVFAGTNPFHRHQQINRIIEGWRKLETVIAIDNQWTSTCRFADIVLPATTQFERNDLDQFGNHSNRGIIAMKQVVSPQFEARNDFDIFRDLCRRFNREAAFTEGLDEMGWLKRIWQEGSQQGKGRGIHLPTFEVFWNQQEYIEFDHPQMFVRHQAFREDPDLEPLGTPSGLIEIYSKTIADMQYDDCQGHPMWFEKIERSHGGPGSQRWPLHLQSVHPDFRLHSQLCESETLRQQYAVGGKEPVFINPQDASARGIRNGDIVRVFNARGQVLAGAVVSDRYAPGVARIHEGAWYDPDKGGDLNALCKYGNPNVLTLDTGTSQLAQATSAHTTLVEIEKYTGPMDNVTAFNGPAEMVAQCEYVPASQGNPHD</sequence>
<feature type="signal peptide" description="Tat-type signal" evidence="2">
    <location>
        <begin position="1"/>
        <end position="39"/>
    </location>
</feature>
<feature type="chain" id="PRO_0000019155" description="Trimethylamine-N-oxide reductase">
    <location>
        <begin position="40"/>
        <end position="850"/>
    </location>
</feature>
<feature type="binding site" evidence="1">
    <location>
        <position position="191"/>
    </location>
    <ligand>
        <name>Mo-bis(molybdopterin guanine dinucleotide)</name>
        <dbReference type="ChEBI" id="CHEBI:60539"/>
    </ligand>
    <ligandPart>
        <name>Mo</name>
        <dbReference type="ChEBI" id="CHEBI:28685"/>
    </ligandPart>
</feature>
<evidence type="ECO:0000250" key="1"/>
<evidence type="ECO:0000255" key="2">
    <source>
        <dbReference type="PROSITE-ProRule" id="PRU00648"/>
    </source>
</evidence>
<evidence type="ECO:0000305" key="3"/>
<comment type="function">
    <text evidence="1">Reduces trimethylamine-N-oxide (TMAO) into trimethylamine; an anaerobic reaction coupled to energy-yielding reactions.</text>
</comment>
<comment type="catalytic activity">
    <reaction>
        <text>trimethylamine + 2 Fe(III)-[cytochrome c] + H2O = trimethylamine N-oxide + 2 Fe(II)-[cytochrome c] + 3 H(+)</text>
        <dbReference type="Rhea" id="RHEA:24236"/>
        <dbReference type="Rhea" id="RHEA-COMP:10350"/>
        <dbReference type="Rhea" id="RHEA-COMP:14399"/>
        <dbReference type="ChEBI" id="CHEBI:15377"/>
        <dbReference type="ChEBI" id="CHEBI:15378"/>
        <dbReference type="ChEBI" id="CHEBI:15724"/>
        <dbReference type="ChEBI" id="CHEBI:29033"/>
        <dbReference type="ChEBI" id="CHEBI:29034"/>
        <dbReference type="ChEBI" id="CHEBI:58389"/>
        <dbReference type="EC" id="1.7.2.3"/>
    </reaction>
</comment>
<comment type="cofactor">
    <cofactor evidence="1">
        <name>Mo-bis(molybdopterin guanine dinucleotide)</name>
        <dbReference type="ChEBI" id="CHEBI:60539"/>
    </cofactor>
    <text evidence="1">Binds 1 molybdenum-bis(molybdopterin guanine dinucleotide) (Mo-bis-MGD) cofactor per subunit.</text>
</comment>
<comment type="subcellular location">
    <subcellularLocation>
        <location evidence="1">Periplasm</location>
    </subcellularLocation>
</comment>
<comment type="PTM">
    <text>Predicted to be exported by the Tat system. The position of the signal peptide cleavage has not been experimentally proven.</text>
</comment>
<comment type="similarity">
    <text evidence="3">Belongs to the prokaryotic molybdopterin-containing oxidoreductase family.</text>
</comment>
<accession>Q8Z2M4</accession>